<proteinExistence type="inferred from homology"/>
<feature type="chain" id="PRO_0000023089" description="Aspartate 1-decarboxylase beta chain" evidence="1">
    <location>
        <begin position="1"/>
        <end position="24"/>
    </location>
</feature>
<feature type="chain" id="PRO_0000023090" description="Aspartate 1-decarboxylase alpha chain" evidence="1">
    <location>
        <begin position="25"/>
        <end position="120"/>
    </location>
</feature>
<feature type="active site" description="Schiff-base intermediate with substrate; via pyruvic acid" evidence="1">
    <location>
        <position position="25"/>
    </location>
</feature>
<feature type="active site" description="Proton donor" evidence="1">
    <location>
        <position position="58"/>
    </location>
</feature>
<feature type="binding site" evidence="1">
    <location>
        <position position="57"/>
    </location>
    <ligand>
        <name>substrate</name>
    </ligand>
</feature>
<feature type="binding site" evidence="1">
    <location>
        <begin position="72"/>
        <end position="74"/>
    </location>
    <ligand>
        <name>substrate</name>
    </ligand>
</feature>
<feature type="modified residue" description="Pyruvic acid (Ser)" evidence="1">
    <location>
        <position position="25"/>
    </location>
</feature>
<keyword id="KW-0068">Autocatalytic cleavage</keyword>
<keyword id="KW-0963">Cytoplasm</keyword>
<keyword id="KW-0210">Decarboxylase</keyword>
<keyword id="KW-0456">Lyase</keyword>
<keyword id="KW-0566">Pantothenate biosynthesis</keyword>
<keyword id="KW-0670">Pyruvate</keyword>
<keyword id="KW-1185">Reference proteome</keyword>
<keyword id="KW-0704">Schiff base</keyword>
<keyword id="KW-0865">Zymogen</keyword>
<gene>
    <name evidence="1" type="primary">panD</name>
    <name type="ordered locus">HH_0331</name>
</gene>
<protein>
    <recommendedName>
        <fullName evidence="1">Aspartate 1-decarboxylase</fullName>
        <ecNumber evidence="1">4.1.1.11</ecNumber>
    </recommendedName>
    <alternativeName>
        <fullName evidence="1">Aspartate alpha-decarboxylase</fullName>
    </alternativeName>
    <component>
        <recommendedName>
            <fullName evidence="1">Aspartate 1-decarboxylase beta chain</fullName>
        </recommendedName>
    </component>
    <component>
        <recommendedName>
            <fullName evidence="1">Aspartate 1-decarboxylase alpha chain</fullName>
        </recommendedName>
    </component>
</protein>
<reference key="1">
    <citation type="journal article" date="2003" name="Proc. Natl. Acad. Sci. U.S.A.">
        <title>The complete genome sequence of the carcinogenic bacterium Helicobacter hepaticus.</title>
        <authorList>
            <person name="Suerbaum S."/>
            <person name="Josenhans C."/>
            <person name="Sterzenbach T."/>
            <person name="Drescher B."/>
            <person name="Brandt P."/>
            <person name="Bell M."/>
            <person name="Droege M."/>
            <person name="Fartmann B."/>
            <person name="Fischer H.-P."/>
            <person name="Ge Z."/>
            <person name="Hoerster A."/>
            <person name="Holland R."/>
            <person name="Klein K."/>
            <person name="Koenig J."/>
            <person name="Macko L."/>
            <person name="Mendz G.L."/>
            <person name="Nyakatura G."/>
            <person name="Schauer D.B."/>
            <person name="Shen Z."/>
            <person name="Weber J."/>
            <person name="Frosch M."/>
            <person name="Fox J.G."/>
        </authorList>
    </citation>
    <scope>NUCLEOTIDE SEQUENCE [LARGE SCALE GENOMIC DNA]</scope>
    <source>
        <strain>ATCC 51449 / 3B1</strain>
    </source>
</reference>
<dbReference type="EC" id="4.1.1.11" evidence="1"/>
<dbReference type="EMBL" id="AE017125">
    <property type="protein sequence ID" value="AAP76928.1"/>
    <property type="status" value="ALT_INIT"/>
    <property type="molecule type" value="Genomic_DNA"/>
</dbReference>
<dbReference type="RefSeq" id="WP_034368323.1">
    <property type="nucleotide sequence ID" value="NC_004917.1"/>
</dbReference>
<dbReference type="SMR" id="Q7VJB2"/>
<dbReference type="STRING" id="235279.HH_0331"/>
<dbReference type="KEGG" id="hhe:HH_0331"/>
<dbReference type="eggNOG" id="COG0853">
    <property type="taxonomic scope" value="Bacteria"/>
</dbReference>
<dbReference type="HOGENOM" id="CLU_115305_2_1_7"/>
<dbReference type="OrthoDB" id="9803983at2"/>
<dbReference type="UniPathway" id="UPA00028">
    <property type="reaction ID" value="UER00002"/>
</dbReference>
<dbReference type="Proteomes" id="UP000002495">
    <property type="component" value="Chromosome"/>
</dbReference>
<dbReference type="GO" id="GO:0005829">
    <property type="term" value="C:cytosol"/>
    <property type="evidence" value="ECO:0007669"/>
    <property type="project" value="TreeGrafter"/>
</dbReference>
<dbReference type="GO" id="GO:0004068">
    <property type="term" value="F:aspartate 1-decarboxylase activity"/>
    <property type="evidence" value="ECO:0007669"/>
    <property type="project" value="UniProtKB-UniRule"/>
</dbReference>
<dbReference type="GO" id="GO:0006523">
    <property type="term" value="P:alanine biosynthetic process"/>
    <property type="evidence" value="ECO:0007669"/>
    <property type="project" value="InterPro"/>
</dbReference>
<dbReference type="GO" id="GO:0015940">
    <property type="term" value="P:pantothenate biosynthetic process"/>
    <property type="evidence" value="ECO:0007669"/>
    <property type="project" value="UniProtKB-UniRule"/>
</dbReference>
<dbReference type="Gene3D" id="2.40.40.20">
    <property type="match status" value="1"/>
</dbReference>
<dbReference type="HAMAP" id="MF_00446">
    <property type="entry name" value="PanD"/>
    <property type="match status" value="1"/>
</dbReference>
<dbReference type="InterPro" id="IPR009010">
    <property type="entry name" value="Asp_de-COase-like_dom_sf"/>
</dbReference>
<dbReference type="InterPro" id="IPR003190">
    <property type="entry name" value="Asp_decarbox"/>
</dbReference>
<dbReference type="NCBIfam" id="TIGR00223">
    <property type="entry name" value="panD"/>
    <property type="match status" value="1"/>
</dbReference>
<dbReference type="PANTHER" id="PTHR21012">
    <property type="entry name" value="ASPARTATE 1-DECARBOXYLASE"/>
    <property type="match status" value="1"/>
</dbReference>
<dbReference type="PANTHER" id="PTHR21012:SF0">
    <property type="entry name" value="ASPARTATE 1-DECARBOXYLASE"/>
    <property type="match status" value="1"/>
</dbReference>
<dbReference type="Pfam" id="PF02261">
    <property type="entry name" value="Asp_decarbox"/>
    <property type="match status" value="1"/>
</dbReference>
<dbReference type="PIRSF" id="PIRSF006246">
    <property type="entry name" value="Asp_decarbox"/>
    <property type="match status" value="1"/>
</dbReference>
<dbReference type="SUPFAM" id="SSF50692">
    <property type="entry name" value="ADC-like"/>
    <property type="match status" value="1"/>
</dbReference>
<comment type="function">
    <text evidence="1">Catalyzes the pyruvoyl-dependent decarboxylation of aspartate to produce beta-alanine.</text>
</comment>
<comment type="catalytic activity">
    <reaction evidence="1">
        <text>L-aspartate + H(+) = beta-alanine + CO2</text>
        <dbReference type="Rhea" id="RHEA:19497"/>
        <dbReference type="ChEBI" id="CHEBI:15378"/>
        <dbReference type="ChEBI" id="CHEBI:16526"/>
        <dbReference type="ChEBI" id="CHEBI:29991"/>
        <dbReference type="ChEBI" id="CHEBI:57966"/>
        <dbReference type="EC" id="4.1.1.11"/>
    </reaction>
</comment>
<comment type="cofactor">
    <cofactor evidence="1">
        <name>pyruvate</name>
        <dbReference type="ChEBI" id="CHEBI:15361"/>
    </cofactor>
    <text evidence="1">Binds 1 pyruvoyl group covalently per subunit.</text>
</comment>
<comment type="pathway">
    <text evidence="1">Cofactor biosynthesis; (R)-pantothenate biosynthesis; beta-alanine from L-aspartate: step 1/1.</text>
</comment>
<comment type="subunit">
    <text evidence="1">Heterooctamer of four alpha and four beta subunits.</text>
</comment>
<comment type="subcellular location">
    <subcellularLocation>
        <location evidence="1">Cytoplasm</location>
    </subcellularLocation>
</comment>
<comment type="PTM">
    <text evidence="1">Is synthesized initially as an inactive proenzyme, which is activated by self-cleavage at a specific serine bond to produce a beta-subunit with a hydroxyl group at its C-terminus and an alpha-subunit with a pyruvoyl group at its N-terminus.</text>
</comment>
<comment type="similarity">
    <text evidence="1">Belongs to the PanD family.</text>
</comment>
<comment type="sequence caution" evidence="2">
    <conflict type="erroneous initiation">
        <sequence resource="EMBL-CDS" id="AAP76928"/>
    </conflict>
</comment>
<accession>Q7VJB2</accession>
<organism>
    <name type="scientific">Helicobacter hepaticus (strain ATCC 51449 / 3B1)</name>
    <dbReference type="NCBI Taxonomy" id="235279"/>
    <lineage>
        <taxon>Bacteria</taxon>
        <taxon>Pseudomonadati</taxon>
        <taxon>Campylobacterota</taxon>
        <taxon>Epsilonproteobacteria</taxon>
        <taxon>Campylobacterales</taxon>
        <taxon>Helicobacteraceae</taxon>
        <taxon>Helicobacter</taxon>
    </lineage>
</organism>
<evidence type="ECO:0000255" key="1">
    <source>
        <dbReference type="HAMAP-Rule" id="MF_00446"/>
    </source>
</evidence>
<evidence type="ECO:0000305" key="2"/>
<name>PAND_HELHP</name>
<sequence length="120" mass="13378">MQFEMLYSKIHRAKVSDANLNYVGSITIDKTLAQSANLLAGMKVEIVNINNGERFSTYVIYGDKKGEICLNGAAARKVQIGDIIIIIAYATYTHNELEHYKPTIVQVNESNQILSITNEV</sequence>